<organism>
    <name type="scientific">Escherichia coli (strain UTI89 / UPEC)</name>
    <dbReference type="NCBI Taxonomy" id="364106"/>
    <lineage>
        <taxon>Bacteria</taxon>
        <taxon>Pseudomonadati</taxon>
        <taxon>Pseudomonadota</taxon>
        <taxon>Gammaproteobacteria</taxon>
        <taxon>Enterobacterales</taxon>
        <taxon>Enterobacteriaceae</taxon>
        <taxon>Escherichia</taxon>
    </lineage>
</organism>
<evidence type="ECO:0000255" key="1">
    <source>
        <dbReference type="HAMAP-Rule" id="MF_00156"/>
    </source>
</evidence>
<feature type="chain" id="PRO_0000297264" description="3-methyl-2-oxobutanoate hydroxymethyltransferase">
    <location>
        <begin position="1"/>
        <end position="264"/>
    </location>
</feature>
<feature type="active site" description="Proton acceptor" evidence="1">
    <location>
        <position position="181"/>
    </location>
</feature>
<feature type="binding site" evidence="1">
    <location>
        <begin position="45"/>
        <end position="46"/>
    </location>
    <ligand>
        <name>3-methyl-2-oxobutanoate</name>
        <dbReference type="ChEBI" id="CHEBI:11851"/>
    </ligand>
</feature>
<feature type="binding site" evidence="1">
    <location>
        <position position="45"/>
    </location>
    <ligand>
        <name>Mg(2+)</name>
        <dbReference type="ChEBI" id="CHEBI:18420"/>
    </ligand>
</feature>
<feature type="binding site" evidence="1">
    <location>
        <position position="84"/>
    </location>
    <ligand>
        <name>3-methyl-2-oxobutanoate</name>
        <dbReference type="ChEBI" id="CHEBI:11851"/>
    </ligand>
</feature>
<feature type="binding site" evidence="1">
    <location>
        <position position="84"/>
    </location>
    <ligand>
        <name>Mg(2+)</name>
        <dbReference type="ChEBI" id="CHEBI:18420"/>
    </ligand>
</feature>
<feature type="binding site" evidence="1">
    <location>
        <position position="112"/>
    </location>
    <ligand>
        <name>3-methyl-2-oxobutanoate</name>
        <dbReference type="ChEBI" id="CHEBI:11851"/>
    </ligand>
</feature>
<feature type="binding site" evidence="1">
    <location>
        <position position="114"/>
    </location>
    <ligand>
        <name>Mg(2+)</name>
        <dbReference type="ChEBI" id="CHEBI:18420"/>
    </ligand>
</feature>
<accession>Q1RG56</accession>
<keyword id="KW-0963">Cytoplasm</keyword>
<keyword id="KW-0460">Magnesium</keyword>
<keyword id="KW-0479">Metal-binding</keyword>
<keyword id="KW-0566">Pantothenate biosynthesis</keyword>
<keyword id="KW-0808">Transferase</keyword>
<proteinExistence type="inferred from homology"/>
<protein>
    <recommendedName>
        <fullName evidence="1">3-methyl-2-oxobutanoate hydroxymethyltransferase</fullName>
        <ecNumber evidence="1">2.1.2.11</ecNumber>
    </recommendedName>
    <alternativeName>
        <fullName evidence="1">Ketopantoate hydroxymethyltransferase</fullName>
        <shortName evidence="1">KPHMT</shortName>
    </alternativeName>
</protein>
<gene>
    <name evidence="1" type="primary">panB</name>
    <name type="ordered locus">UTI89_C0148</name>
</gene>
<name>PANB_ECOUT</name>
<dbReference type="EC" id="2.1.2.11" evidence="1"/>
<dbReference type="EMBL" id="CP000243">
    <property type="protein sequence ID" value="ABE05658.1"/>
    <property type="molecule type" value="Genomic_DNA"/>
</dbReference>
<dbReference type="RefSeq" id="WP_000805462.1">
    <property type="nucleotide sequence ID" value="NZ_CP064825.1"/>
</dbReference>
<dbReference type="SMR" id="Q1RG56"/>
<dbReference type="KEGG" id="eci:UTI89_C0148"/>
<dbReference type="HOGENOM" id="CLU_036645_1_0_6"/>
<dbReference type="UniPathway" id="UPA00028">
    <property type="reaction ID" value="UER00003"/>
</dbReference>
<dbReference type="Proteomes" id="UP000001952">
    <property type="component" value="Chromosome"/>
</dbReference>
<dbReference type="GO" id="GO:0005737">
    <property type="term" value="C:cytoplasm"/>
    <property type="evidence" value="ECO:0007669"/>
    <property type="project" value="UniProtKB-SubCell"/>
</dbReference>
<dbReference type="GO" id="GO:0003864">
    <property type="term" value="F:3-methyl-2-oxobutanoate hydroxymethyltransferase activity"/>
    <property type="evidence" value="ECO:0007669"/>
    <property type="project" value="UniProtKB-UniRule"/>
</dbReference>
<dbReference type="GO" id="GO:0000287">
    <property type="term" value="F:magnesium ion binding"/>
    <property type="evidence" value="ECO:0007669"/>
    <property type="project" value="TreeGrafter"/>
</dbReference>
<dbReference type="GO" id="GO:0015940">
    <property type="term" value="P:pantothenate biosynthetic process"/>
    <property type="evidence" value="ECO:0007669"/>
    <property type="project" value="UniProtKB-UniRule"/>
</dbReference>
<dbReference type="CDD" id="cd06557">
    <property type="entry name" value="KPHMT-like"/>
    <property type="match status" value="1"/>
</dbReference>
<dbReference type="FunFam" id="3.20.20.60:FF:000003">
    <property type="entry name" value="3-methyl-2-oxobutanoate hydroxymethyltransferase"/>
    <property type="match status" value="1"/>
</dbReference>
<dbReference type="Gene3D" id="3.20.20.60">
    <property type="entry name" value="Phosphoenolpyruvate-binding domains"/>
    <property type="match status" value="1"/>
</dbReference>
<dbReference type="HAMAP" id="MF_00156">
    <property type="entry name" value="PanB"/>
    <property type="match status" value="1"/>
</dbReference>
<dbReference type="InterPro" id="IPR003700">
    <property type="entry name" value="Pantoate_hydroxy_MeTrfase"/>
</dbReference>
<dbReference type="InterPro" id="IPR015813">
    <property type="entry name" value="Pyrv/PenolPyrv_kinase-like_dom"/>
</dbReference>
<dbReference type="InterPro" id="IPR040442">
    <property type="entry name" value="Pyrv_kinase-like_dom_sf"/>
</dbReference>
<dbReference type="NCBIfam" id="TIGR00222">
    <property type="entry name" value="panB"/>
    <property type="match status" value="1"/>
</dbReference>
<dbReference type="NCBIfam" id="NF001452">
    <property type="entry name" value="PRK00311.1"/>
    <property type="match status" value="1"/>
</dbReference>
<dbReference type="PANTHER" id="PTHR20881">
    <property type="entry name" value="3-METHYL-2-OXOBUTANOATE HYDROXYMETHYLTRANSFERASE"/>
    <property type="match status" value="1"/>
</dbReference>
<dbReference type="PANTHER" id="PTHR20881:SF0">
    <property type="entry name" value="3-METHYL-2-OXOBUTANOATE HYDROXYMETHYLTRANSFERASE"/>
    <property type="match status" value="1"/>
</dbReference>
<dbReference type="Pfam" id="PF02548">
    <property type="entry name" value="Pantoate_transf"/>
    <property type="match status" value="1"/>
</dbReference>
<dbReference type="PIRSF" id="PIRSF000388">
    <property type="entry name" value="Pantoate_hydroxy_MeTrfase"/>
    <property type="match status" value="1"/>
</dbReference>
<dbReference type="SUPFAM" id="SSF51621">
    <property type="entry name" value="Phosphoenolpyruvate/pyruvate domain"/>
    <property type="match status" value="1"/>
</dbReference>
<sequence>MKPTTIASLQKCKQDKKRFATITAYDYSFAKLFAEEGLNVMLVGDSLGMTVQGHDSTLPVTVADIAYHTAAVRRGAPNCLLLADLPFMAYATPEQAFENAATVMRAGANMVKIEGGEWLVETVQMLTERAVPVCGHLGLTPQSVNIFGGYKVQGRGDEAGDRLLSDALALEAAGAQLLVLECVPVELAKRITEALAIPVIGIGAGNVTDGQILVMHDAFGITGGHIPKFAKNFLAETGDIRAAVRQYMAEVESGVYPGEEHSFH</sequence>
<comment type="function">
    <text evidence="1">Catalyzes the reversible reaction in which hydroxymethyl group from 5,10-methylenetetrahydrofolate is transferred onto alpha-ketoisovalerate to form ketopantoate.</text>
</comment>
<comment type="catalytic activity">
    <reaction evidence="1">
        <text>3-methyl-2-oxobutanoate + (6R)-5,10-methylene-5,6,7,8-tetrahydrofolate + H2O = 2-dehydropantoate + (6S)-5,6,7,8-tetrahydrofolate</text>
        <dbReference type="Rhea" id="RHEA:11824"/>
        <dbReference type="ChEBI" id="CHEBI:11561"/>
        <dbReference type="ChEBI" id="CHEBI:11851"/>
        <dbReference type="ChEBI" id="CHEBI:15377"/>
        <dbReference type="ChEBI" id="CHEBI:15636"/>
        <dbReference type="ChEBI" id="CHEBI:57453"/>
        <dbReference type="EC" id="2.1.2.11"/>
    </reaction>
</comment>
<comment type="cofactor">
    <cofactor evidence="1">
        <name>Mg(2+)</name>
        <dbReference type="ChEBI" id="CHEBI:18420"/>
    </cofactor>
    <text evidence="1">Binds 1 Mg(2+) ion per subunit.</text>
</comment>
<comment type="pathway">
    <text evidence="1">Cofactor biosynthesis; (R)-pantothenate biosynthesis; (R)-pantoate from 3-methyl-2-oxobutanoate: step 1/2.</text>
</comment>
<comment type="subunit">
    <text evidence="1">Homodecamer; pentamer of dimers.</text>
</comment>
<comment type="subcellular location">
    <subcellularLocation>
        <location evidence="1">Cytoplasm</location>
    </subcellularLocation>
</comment>
<comment type="similarity">
    <text evidence="1">Belongs to the PanB family.</text>
</comment>
<reference key="1">
    <citation type="journal article" date="2006" name="Proc. Natl. Acad. Sci. U.S.A.">
        <title>Identification of genes subject to positive selection in uropathogenic strains of Escherichia coli: a comparative genomics approach.</title>
        <authorList>
            <person name="Chen S.L."/>
            <person name="Hung C.-S."/>
            <person name="Xu J."/>
            <person name="Reigstad C.S."/>
            <person name="Magrini V."/>
            <person name="Sabo A."/>
            <person name="Blasiar D."/>
            <person name="Bieri T."/>
            <person name="Meyer R.R."/>
            <person name="Ozersky P."/>
            <person name="Armstrong J.R."/>
            <person name="Fulton R.S."/>
            <person name="Latreille J.P."/>
            <person name="Spieth J."/>
            <person name="Hooton T.M."/>
            <person name="Mardis E.R."/>
            <person name="Hultgren S.J."/>
            <person name="Gordon J.I."/>
        </authorList>
    </citation>
    <scope>NUCLEOTIDE SEQUENCE [LARGE SCALE GENOMIC DNA]</scope>
    <source>
        <strain>UTI89 / UPEC</strain>
    </source>
</reference>